<sequence>MAKDNSFDIVSEMNLEEVKNAIQIAEKEILNRYDFKGSKSEMSLDNGDLVLISDDDYKLEQLKDVLITKLIKRGVPTKNLDYQKVENALGGTVRQRVKLKSGIDKDDAKKINNAIKESKLKVKSQIQDDQIRVTGKSRDDLQAVMQLVRELELSVDAQFTNFR</sequence>
<accession>C4L0Z7</accession>
<comment type="function">
    <text evidence="1">Nucleotide-binding protein.</text>
</comment>
<comment type="similarity">
    <text evidence="1">Belongs to the YajQ family.</text>
</comment>
<evidence type="ECO:0000255" key="1">
    <source>
        <dbReference type="HAMAP-Rule" id="MF_00632"/>
    </source>
</evidence>
<gene>
    <name type="ordered locus">EAT1b_2037</name>
</gene>
<reference key="1">
    <citation type="journal article" date="2011" name="J. Bacteriol.">
        <title>Complete genome sequence of the Thermophilic Bacterium Exiguobacterium sp. AT1b.</title>
        <authorList>
            <person name="Vishnivetskaya T.A."/>
            <person name="Lucas S."/>
            <person name="Copeland A."/>
            <person name="Lapidus A."/>
            <person name="Glavina del Rio T."/>
            <person name="Dalin E."/>
            <person name="Tice H."/>
            <person name="Bruce D.C."/>
            <person name="Goodwin L.A."/>
            <person name="Pitluck S."/>
            <person name="Saunders E."/>
            <person name="Brettin T."/>
            <person name="Detter C."/>
            <person name="Han C."/>
            <person name="Larimer F."/>
            <person name="Land M.L."/>
            <person name="Hauser L.J."/>
            <person name="Kyrpides N.C."/>
            <person name="Ovchinnikova G."/>
            <person name="Kathariou S."/>
            <person name="Ramaley R.F."/>
            <person name="Rodrigues D.F."/>
            <person name="Hendrix C."/>
            <person name="Richardson P."/>
            <person name="Tiedje J.M."/>
        </authorList>
    </citation>
    <scope>NUCLEOTIDE SEQUENCE [LARGE SCALE GENOMIC DNA]</scope>
    <source>
        <strain>ATCC BAA-1283 / AT1b</strain>
    </source>
</reference>
<organism>
    <name type="scientific">Exiguobacterium sp. (strain ATCC BAA-1283 / AT1b)</name>
    <dbReference type="NCBI Taxonomy" id="360911"/>
    <lineage>
        <taxon>Bacteria</taxon>
        <taxon>Bacillati</taxon>
        <taxon>Bacillota</taxon>
        <taxon>Bacilli</taxon>
        <taxon>Bacillales</taxon>
        <taxon>Bacillales Family XII. Incertae Sedis</taxon>
        <taxon>Exiguobacterium</taxon>
    </lineage>
</organism>
<proteinExistence type="inferred from homology"/>
<keyword id="KW-0547">Nucleotide-binding</keyword>
<dbReference type="EMBL" id="CP001615">
    <property type="protein sequence ID" value="ACQ70960.1"/>
    <property type="molecule type" value="Genomic_DNA"/>
</dbReference>
<dbReference type="RefSeq" id="WP_015880519.1">
    <property type="nucleotide sequence ID" value="NZ_MOEL01000011.1"/>
</dbReference>
<dbReference type="SMR" id="C4L0Z7"/>
<dbReference type="STRING" id="360911.EAT1b_2037"/>
<dbReference type="KEGG" id="eat:EAT1b_2037"/>
<dbReference type="eggNOG" id="COG1666">
    <property type="taxonomic scope" value="Bacteria"/>
</dbReference>
<dbReference type="HOGENOM" id="CLU_099839_1_0_9"/>
<dbReference type="OrthoDB" id="9801447at2"/>
<dbReference type="Proteomes" id="UP000000716">
    <property type="component" value="Chromosome"/>
</dbReference>
<dbReference type="GO" id="GO:0005829">
    <property type="term" value="C:cytosol"/>
    <property type="evidence" value="ECO:0007669"/>
    <property type="project" value="TreeGrafter"/>
</dbReference>
<dbReference type="GO" id="GO:0000166">
    <property type="term" value="F:nucleotide binding"/>
    <property type="evidence" value="ECO:0007669"/>
    <property type="project" value="TreeGrafter"/>
</dbReference>
<dbReference type="CDD" id="cd11740">
    <property type="entry name" value="YajQ_like"/>
    <property type="match status" value="1"/>
</dbReference>
<dbReference type="FunFam" id="3.30.70.990:FF:000002">
    <property type="entry name" value="UPF0234 protein LEP1GSC067_4943"/>
    <property type="match status" value="1"/>
</dbReference>
<dbReference type="Gene3D" id="3.30.70.860">
    <property type="match status" value="1"/>
</dbReference>
<dbReference type="Gene3D" id="3.30.70.990">
    <property type="entry name" value="YajQ-like, domain 2"/>
    <property type="match status" value="1"/>
</dbReference>
<dbReference type="HAMAP" id="MF_00632">
    <property type="entry name" value="YajQ"/>
    <property type="match status" value="1"/>
</dbReference>
<dbReference type="InterPro" id="IPR007551">
    <property type="entry name" value="DUF520"/>
</dbReference>
<dbReference type="InterPro" id="IPR035571">
    <property type="entry name" value="UPF0234-like_C"/>
</dbReference>
<dbReference type="InterPro" id="IPR035570">
    <property type="entry name" value="UPF0234_N"/>
</dbReference>
<dbReference type="InterPro" id="IPR036183">
    <property type="entry name" value="YajQ-like_sf"/>
</dbReference>
<dbReference type="NCBIfam" id="NF003819">
    <property type="entry name" value="PRK05412.1"/>
    <property type="match status" value="1"/>
</dbReference>
<dbReference type="PANTHER" id="PTHR30476">
    <property type="entry name" value="UPF0234 PROTEIN YAJQ"/>
    <property type="match status" value="1"/>
</dbReference>
<dbReference type="PANTHER" id="PTHR30476:SF0">
    <property type="entry name" value="UPF0234 PROTEIN YAJQ"/>
    <property type="match status" value="1"/>
</dbReference>
<dbReference type="Pfam" id="PF04461">
    <property type="entry name" value="DUF520"/>
    <property type="match status" value="1"/>
</dbReference>
<dbReference type="SUPFAM" id="SSF89963">
    <property type="entry name" value="YajQ-like"/>
    <property type="match status" value="2"/>
</dbReference>
<protein>
    <recommendedName>
        <fullName evidence="1">Nucleotide-binding protein EAT1b_2037</fullName>
    </recommendedName>
</protein>
<name>Y2037_EXISA</name>
<feature type="chain" id="PRO_1000212334" description="Nucleotide-binding protein EAT1b_2037">
    <location>
        <begin position="1"/>
        <end position="163"/>
    </location>
</feature>